<name>PTH_BACCQ</name>
<dbReference type="EC" id="3.1.1.29" evidence="1"/>
<dbReference type="EMBL" id="CP000227">
    <property type="protein sequence ID" value="ACM10578.1"/>
    <property type="molecule type" value="Genomic_DNA"/>
</dbReference>
<dbReference type="SMR" id="B9IZD4"/>
<dbReference type="KEGG" id="bcq:BCQ_0058"/>
<dbReference type="HOGENOM" id="CLU_062456_4_1_9"/>
<dbReference type="Proteomes" id="UP000000441">
    <property type="component" value="Chromosome"/>
</dbReference>
<dbReference type="GO" id="GO:0005737">
    <property type="term" value="C:cytoplasm"/>
    <property type="evidence" value="ECO:0007669"/>
    <property type="project" value="UniProtKB-SubCell"/>
</dbReference>
<dbReference type="GO" id="GO:0004045">
    <property type="term" value="F:peptidyl-tRNA hydrolase activity"/>
    <property type="evidence" value="ECO:0007669"/>
    <property type="project" value="UniProtKB-UniRule"/>
</dbReference>
<dbReference type="GO" id="GO:0000049">
    <property type="term" value="F:tRNA binding"/>
    <property type="evidence" value="ECO:0007669"/>
    <property type="project" value="UniProtKB-UniRule"/>
</dbReference>
<dbReference type="GO" id="GO:0006515">
    <property type="term" value="P:protein quality control for misfolded or incompletely synthesized proteins"/>
    <property type="evidence" value="ECO:0007669"/>
    <property type="project" value="UniProtKB-UniRule"/>
</dbReference>
<dbReference type="GO" id="GO:0072344">
    <property type="term" value="P:rescue of stalled ribosome"/>
    <property type="evidence" value="ECO:0007669"/>
    <property type="project" value="UniProtKB-UniRule"/>
</dbReference>
<dbReference type="CDD" id="cd00462">
    <property type="entry name" value="PTH"/>
    <property type="match status" value="1"/>
</dbReference>
<dbReference type="FunFam" id="3.40.50.1470:FF:000001">
    <property type="entry name" value="Peptidyl-tRNA hydrolase"/>
    <property type="match status" value="1"/>
</dbReference>
<dbReference type="Gene3D" id="3.40.50.1470">
    <property type="entry name" value="Peptidyl-tRNA hydrolase"/>
    <property type="match status" value="1"/>
</dbReference>
<dbReference type="HAMAP" id="MF_00083">
    <property type="entry name" value="Pept_tRNA_hydro_bact"/>
    <property type="match status" value="1"/>
</dbReference>
<dbReference type="InterPro" id="IPR001328">
    <property type="entry name" value="Pept_tRNA_hydro"/>
</dbReference>
<dbReference type="InterPro" id="IPR018171">
    <property type="entry name" value="Pept_tRNA_hydro_CS"/>
</dbReference>
<dbReference type="InterPro" id="IPR036416">
    <property type="entry name" value="Pept_tRNA_hydro_sf"/>
</dbReference>
<dbReference type="NCBIfam" id="TIGR00447">
    <property type="entry name" value="pth"/>
    <property type="match status" value="1"/>
</dbReference>
<dbReference type="PANTHER" id="PTHR17224">
    <property type="entry name" value="PEPTIDYL-TRNA HYDROLASE"/>
    <property type="match status" value="1"/>
</dbReference>
<dbReference type="PANTHER" id="PTHR17224:SF1">
    <property type="entry name" value="PEPTIDYL-TRNA HYDROLASE"/>
    <property type="match status" value="1"/>
</dbReference>
<dbReference type="Pfam" id="PF01195">
    <property type="entry name" value="Pept_tRNA_hydro"/>
    <property type="match status" value="1"/>
</dbReference>
<dbReference type="SUPFAM" id="SSF53178">
    <property type="entry name" value="Peptidyl-tRNA hydrolase-like"/>
    <property type="match status" value="1"/>
</dbReference>
<dbReference type="PROSITE" id="PS01195">
    <property type="entry name" value="PEPT_TRNA_HYDROL_1"/>
    <property type="match status" value="1"/>
</dbReference>
<dbReference type="PROSITE" id="PS01196">
    <property type="entry name" value="PEPT_TRNA_HYDROL_2"/>
    <property type="match status" value="1"/>
</dbReference>
<gene>
    <name evidence="1" type="primary">pth</name>
    <name type="ordered locus">BCQ_0058</name>
</gene>
<keyword id="KW-0963">Cytoplasm</keyword>
<keyword id="KW-0378">Hydrolase</keyword>
<keyword id="KW-0694">RNA-binding</keyword>
<keyword id="KW-0820">tRNA-binding</keyword>
<feature type="chain" id="PRO_1000192958" description="Peptidyl-tRNA hydrolase">
    <location>
        <begin position="1"/>
        <end position="186"/>
    </location>
</feature>
<feature type="active site" description="Proton acceptor" evidence="1">
    <location>
        <position position="19"/>
    </location>
</feature>
<feature type="binding site" evidence="1">
    <location>
        <position position="14"/>
    </location>
    <ligand>
        <name>tRNA</name>
        <dbReference type="ChEBI" id="CHEBI:17843"/>
    </ligand>
</feature>
<feature type="binding site" evidence="1">
    <location>
        <position position="64"/>
    </location>
    <ligand>
        <name>tRNA</name>
        <dbReference type="ChEBI" id="CHEBI:17843"/>
    </ligand>
</feature>
<feature type="binding site" evidence="1">
    <location>
        <position position="66"/>
    </location>
    <ligand>
        <name>tRNA</name>
        <dbReference type="ChEBI" id="CHEBI:17843"/>
    </ligand>
</feature>
<feature type="binding site" evidence="1">
    <location>
        <position position="112"/>
    </location>
    <ligand>
        <name>tRNA</name>
        <dbReference type="ChEBI" id="CHEBI:17843"/>
    </ligand>
</feature>
<feature type="site" description="Discriminates between blocked and unblocked aminoacyl-tRNA" evidence="1">
    <location>
        <position position="9"/>
    </location>
</feature>
<feature type="site" description="Stabilizes the basic form of H active site to accept a proton" evidence="1">
    <location>
        <position position="91"/>
    </location>
</feature>
<sequence>MKLIVGLGNPGREYELTRHNIGFMAIDELAKRWNISLNEQKFKGVFGAGFVNGEKVILLKPLTYMNLSGESIRPLMDYYKIDVEDFVVLYDDLDIPVGKLRLRMKGSAGGHNGVKSTISHLGTQEFQRIRMGIDRPKNGMKVVDYVLGRFTSEEIPDVNHSIEKAADACEEWLNKPFLQIMNTFNS</sequence>
<evidence type="ECO:0000255" key="1">
    <source>
        <dbReference type="HAMAP-Rule" id="MF_00083"/>
    </source>
</evidence>
<comment type="function">
    <text evidence="1">Hydrolyzes ribosome-free peptidyl-tRNAs (with 1 or more amino acids incorporated), which drop off the ribosome during protein synthesis, or as a result of ribosome stalling.</text>
</comment>
<comment type="function">
    <text evidence="1">Catalyzes the release of premature peptidyl moieties from peptidyl-tRNA molecules trapped in stalled 50S ribosomal subunits, and thus maintains levels of free tRNAs and 50S ribosomes.</text>
</comment>
<comment type="catalytic activity">
    <reaction evidence="1">
        <text>an N-acyl-L-alpha-aminoacyl-tRNA + H2O = an N-acyl-L-amino acid + a tRNA + H(+)</text>
        <dbReference type="Rhea" id="RHEA:54448"/>
        <dbReference type="Rhea" id="RHEA-COMP:10123"/>
        <dbReference type="Rhea" id="RHEA-COMP:13883"/>
        <dbReference type="ChEBI" id="CHEBI:15377"/>
        <dbReference type="ChEBI" id="CHEBI:15378"/>
        <dbReference type="ChEBI" id="CHEBI:59874"/>
        <dbReference type="ChEBI" id="CHEBI:78442"/>
        <dbReference type="ChEBI" id="CHEBI:138191"/>
        <dbReference type="EC" id="3.1.1.29"/>
    </reaction>
</comment>
<comment type="subunit">
    <text evidence="1">Monomer.</text>
</comment>
<comment type="subcellular location">
    <subcellularLocation>
        <location evidence="1">Cytoplasm</location>
    </subcellularLocation>
</comment>
<comment type="similarity">
    <text evidence="1">Belongs to the PTH family.</text>
</comment>
<proteinExistence type="inferred from homology"/>
<protein>
    <recommendedName>
        <fullName evidence="1">Peptidyl-tRNA hydrolase</fullName>
        <shortName evidence="1">Pth</shortName>
        <ecNumber evidence="1">3.1.1.29</ecNumber>
    </recommendedName>
</protein>
<accession>B9IZD4</accession>
<organism>
    <name type="scientific">Bacillus cereus (strain Q1)</name>
    <dbReference type="NCBI Taxonomy" id="361100"/>
    <lineage>
        <taxon>Bacteria</taxon>
        <taxon>Bacillati</taxon>
        <taxon>Bacillota</taxon>
        <taxon>Bacilli</taxon>
        <taxon>Bacillales</taxon>
        <taxon>Bacillaceae</taxon>
        <taxon>Bacillus</taxon>
        <taxon>Bacillus cereus group</taxon>
    </lineage>
</organism>
<reference key="1">
    <citation type="journal article" date="2009" name="J. Bacteriol.">
        <title>Complete genome sequence of the extremophilic Bacillus cereus strain Q1 with industrial applications.</title>
        <authorList>
            <person name="Xiong Z."/>
            <person name="Jiang Y."/>
            <person name="Qi D."/>
            <person name="Lu H."/>
            <person name="Yang F."/>
            <person name="Yang J."/>
            <person name="Chen L."/>
            <person name="Sun L."/>
            <person name="Xu X."/>
            <person name="Xue Y."/>
            <person name="Zhu Y."/>
            <person name="Jin Q."/>
        </authorList>
    </citation>
    <scope>NUCLEOTIDE SEQUENCE [LARGE SCALE GENOMIC DNA]</scope>
    <source>
        <strain>Q1</strain>
    </source>
</reference>